<reference key="1">
    <citation type="journal article" date="2005" name="J. Bacteriol.">
        <title>Swine and poultry pathogens: the complete genome sequences of two strains of Mycoplasma hyopneumoniae and a strain of Mycoplasma synoviae.</title>
        <authorList>
            <person name="Vasconcelos A.T.R."/>
            <person name="Ferreira H.B."/>
            <person name="Bizarro C.V."/>
            <person name="Bonatto S.L."/>
            <person name="Carvalho M.O."/>
            <person name="Pinto P.M."/>
            <person name="Almeida D.F."/>
            <person name="Almeida L.G.P."/>
            <person name="Almeida R."/>
            <person name="Alves-Junior L."/>
            <person name="Assuncao E.N."/>
            <person name="Azevedo V.A.C."/>
            <person name="Bogo M.R."/>
            <person name="Brigido M.M."/>
            <person name="Brocchi M."/>
            <person name="Burity H.A."/>
            <person name="Camargo A.A."/>
            <person name="Camargo S.S."/>
            <person name="Carepo M.S."/>
            <person name="Carraro D.M."/>
            <person name="de Mattos Cascardo J.C."/>
            <person name="Castro L.A."/>
            <person name="Cavalcanti G."/>
            <person name="Chemale G."/>
            <person name="Collevatti R.G."/>
            <person name="Cunha C.W."/>
            <person name="Dallagiovanna B."/>
            <person name="Dambros B.P."/>
            <person name="Dellagostin O.A."/>
            <person name="Falcao C."/>
            <person name="Fantinatti-Garboggini F."/>
            <person name="Felipe M.S.S."/>
            <person name="Fiorentin L."/>
            <person name="Franco G.R."/>
            <person name="Freitas N.S.A."/>
            <person name="Frias D."/>
            <person name="Grangeiro T.B."/>
            <person name="Grisard E.C."/>
            <person name="Guimaraes C.T."/>
            <person name="Hungria M."/>
            <person name="Jardim S.N."/>
            <person name="Krieger M.A."/>
            <person name="Laurino J.P."/>
            <person name="Lima L.F.A."/>
            <person name="Lopes M.I."/>
            <person name="Loreto E.L.S."/>
            <person name="Madeira H.M.F."/>
            <person name="Manfio G.P."/>
            <person name="Maranhao A.Q."/>
            <person name="Martinkovics C.T."/>
            <person name="Medeiros S.R.B."/>
            <person name="Moreira M.A.M."/>
            <person name="Neiva M."/>
            <person name="Ramalho-Neto C.E."/>
            <person name="Nicolas M.F."/>
            <person name="Oliveira S.C."/>
            <person name="Paixao R.F.C."/>
            <person name="Pedrosa F.O."/>
            <person name="Pena S.D.J."/>
            <person name="Pereira M."/>
            <person name="Pereira-Ferrari L."/>
            <person name="Piffer I."/>
            <person name="Pinto L.S."/>
            <person name="Potrich D.P."/>
            <person name="Salim A.C.M."/>
            <person name="Santos F.R."/>
            <person name="Schmitt R."/>
            <person name="Schneider M.P.C."/>
            <person name="Schrank A."/>
            <person name="Schrank I.S."/>
            <person name="Schuck A.F."/>
            <person name="Seuanez H.N."/>
            <person name="Silva D.W."/>
            <person name="Silva R."/>
            <person name="Silva S.C."/>
            <person name="Soares C.M.A."/>
            <person name="Souza K.R.L."/>
            <person name="Souza R.C."/>
            <person name="Staats C.C."/>
            <person name="Steffens M.B.R."/>
            <person name="Teixeira S.M.R."/>
            <person name="Urmenyi T.P."/>
            <person name="Vainstein M.H."/>
            <person name="Zuccherato L.W."/>
            <person name="Simpson A.J.G."/>
            <person name="Zaha A."/>
        </authorList>
    </citation>
    <scope>NUCLEOTIDE SEQUENCE [LARGE SCALE GENOMIC DNA]</scope>
    <source>
        <strain>53</strain>
    </source>
</reference>
<proteinExistence type="inferred from homology"/>
<gene>
    <name evidence="1" type="primary">rplM</name>
    <name type="ordered locus">MS53_0076</name>
</gene>
<accession>Q4A6X4</accession>
<comment type="function">
    <text evidence="1">This protein is one of the early assembly proteins of the 50S ribosomal subunit, although it is not seen to bind rRNA by itself. It is important during the early stages of 50S assembly.</text>
</comment>
<comment type="subunit">
    <text evidence="1">Part of the 50S ribosomal subunit.</text>
</comment>
<comment type="similarity">
    <text evidence="1">Belongs to the universal ribosomal protein uL13 family.</text>
</comment>
<keyword id="KW-1185">Reference proteome</keyword>
<keyword id="KW-0687">Ribonucleoprotein</keyword>
<keyword id="KW-0689">Ribosomal protein</keyword>
<evidence type="ECO:0000255" key="1">
    <source>
        <dbReference type="HAMAP-Rule" id="MF_01366"/>
    </source>
</evidence>
<evidence type="ECO:0000305" key="2"/>
<organism>
    <name type="scientific">Mycoplasmopsis synoviae (strain 53)</name>
    <name type="common">Mycoplasma synoviae</name>
    <dbReference type="NCBI Taxonomy" id="262723"/>
    <lineage>
        <taxon>Bacteria</taxon>
        <taxon>Bacillati</taxon>
        <taxon>Mycoplasmatota</taxon>
        <taxon>Mycoplasmoidales</taxon>
        <taxon>Metamycoplasmataceae</taxon>
        <taxon>Mycoplasmopsis</taxon>
    </lineage>
</organism>
<name>RL13_MYCS5</name>
<sequence>MRQTTIVNKENSNKKWFVVDAENQVLGRLASLVASVLRGKTKPTFTPNADMGDNVIIINAEKVKLTGKKEKNKVYYSHSGYPGGLKARTAEKLREEKPTALLEKAISGMIPHTKLGNQQRKNLYVYAGPEHKHQAQNPERLEVK</sequence>
<dbReference type="EMBL" id="AE017245">
    <property type="protein sequence ID" value="AAZ43497.1"/>
    <property type="molecule type" value="Genomic_DNA"/>
</dbReference>
<dbReference type="RefSeq" id="WP_011283240.1">
    <property type="nucleotide sequence ID" value="NC_007294.1"/>
</dbReference>
<dbReference type="SMR" id="Q4A6X4"/>
<dbReference type="STRING" id="262723.MS53_0076"/>
<dbReference type="KEGG" id="msy:MS53_0076"/>
<dbReference type="eggNOG" id="COG0102">
    <property type="taxonomic scope" value="Bacteria"/>
</dbReference>
<dbReference type="HOGENOM" id="CLU_082184_2_2_14"/>
<dbReference type="OrthoDB" id="9801330at2"/>
<dbReference type="Proteomes" id="UP000000549">
    <property type="component" value="Chromosome"/>
</dbReference>
<dbReference type="GO" id="GO:0022625">
    <property type="term" value="C:cytosolic large ribosomal subunit"/>
    <property type="evidence" value="ECO:0007669"/>
    <property type="project" value="TreeGrafter"/>
</dbReference>
<dbReference type="GO" id="GO:0003729">
    <property type="term" value="F:mRNA binding"/>
    <property type="evidence" value="ECO:0007669"/>
    <property type="project" value="TreeGrafter"/>
</dbReference>
<dbReference type="GO" id="GO:0003735">
    <property type="term" value="F:structural constituent of ribosome"/>
    <property type="evidence" value="ECO:0007669"/>
    <property type="project" value="InterPro"/>
</dbReference>
<dbReference type="GO" id="GO:0017148">
    <property type="term" value="P:negative regulation of translation"/>
    <property type="evidence" value="ECO:0007669"/>
    <property type="project" value="TreeGrafter"/>
</dbReference>
<dbReference type="GO" id="GO:0006412">
    <property type="term" value="P:translation"/>
    <property type="evidence" value="ECO:0007669"/>
    <property type="project" value="UniProtKB-UniRule"/>
</dbReference>
<dbReference type="CDD" id="cd00392">
    <property type="entry name" value="Ribosomal_L13"/>
    <property type="match status" value="1"/>
</dbReference>
<dbReference type="FunFam" id="3.90.1180.10:FF:000001">
    <property type="entry name" value="50S ribosomal protein L13"/>
    <property type="match status" value="1"/>
</dbReference>
<dbReference type="Gene3D" id="3.90.1180.10">
    <property type="entry name" value="Ribosomal protein L13"/>
    <property type="match status" value="1"/>
</dbReference>
<dbReference type="HAMAP" id="MF_01366">
    <property type="entry name" value="Ribosomal_uL13"/>
    <property type="match status" value="1"/>
</dbReference>
<dbReference type="InterPro" id="IPR005822">
    <property type="entry name" value="Ribosomal_uL13"/>
</dbReference>
<dbReference type="InterPro" id="IPR005823">
    <property type="entry name" value="Ribosomal_uL13_bac-type"/>
</dbReference>
<dbReference type="InterPro" id="IPR023563">
    <property type="entry name" value="Ribosomal_uL13_CS"/>
</dbReference>
<dbReference type="InterPro" id="IPR036899">
    <property type="entry name" value="Ribosomal_uL13_sf"/>
</dbReference>
<dbReference type="NCBIfam" id="TIGR01066">
    <property type="entry name" value="rplM_bact"/>
    <property type="match status" value="1"/>
</dbReference>
<dbReference type="PANTHER" id="PTHR11545:SF2">
    <property type="entry name" value="LARGE RIBOSOMAL SUBUNIT PROTEIN UL13M"/>
    <property type="match status" value="1"/>
</dbReference>
<dbReference type="PANTHER" id="PTHR11545">
    <property type="entry name" value="RIBOSOMAL PROTEIN L13"/>
    <property type="match status" value="1"/>
</dbReference>
<dbReference type="Pfam" id="PF00572">
    <property type="entry name" value="Ribosomal_L13"/>
    <property type="match status" value="1"/>
</dbReference>
<dbReference type="PIRSF" id="PIRSF002181">
    <property type="entry name" value="Ribosomal_L13"/>
    <property type="match status" value="1"/>
</dbReference>
<dbReference type="SUPFAM" id="SSF52161">
    <property type="entry name" value="Ribosomal protein L13"/>
    <property type="match status" value="1"/>
</dbReference>
<dbReference type="PROSITE" id="PS00783">
    <property type="entry name" value="RIBOSOMAL_L13"/>
    <property type="match status" value="1"/>
</dbReference>
<protein>
    <recommendedName>
        <fullName evidence="1">Large ribosomal subunit protein uL13</fullName>
    </recommendedName>
    <alternativeName>
        <fullName evidence="2">50S ribosomal protein L13</fullName>
    </alternativeName>
</protein>
<feature type="chain" id="PRO_1000055417" description="Large ribosomal subunit protein uL13">
    <location>
        <begin position="1"/>
        <end position="144"/>
    </location>
</feature>